<sequence>MDLSMLRAKLHRLRVTEADLYYEGSITIDEELLDAAGLLPYEKVQVVNVNNGSRLETYTIPGEAGERTVCLNGPAARLAAPGDEVIVIAYAELTPSEAREHHPRVVHVDENNDVTKTRTLDVAKETDENLAPDGMEDVLIAEGPQS</sequence>
<name>PAND_SALRD</name>
<accession>Q2S2P5</accession>
<reference key="1">
    <citation type="journal article" date="2005" name="Proc. Natl. Acad. Sci. U.S.A.">
        <title>The genome of Salinibacter ruber: convergence and gene exchange among hyperhalophilic bacteria and archaea.</title>
        <authorList>
            <person name="Mongodin E.F."/>
            <person name="Nelson K.E."/>
            <person name="Daugherty S."/>
            <person name="DeBoy R.T."/>
            <person name="Wister J."/>
            <person name="Khouri H."/>
            <person name="Weidman J."/>
            <person name="Walsh D.A."/>
            <person name="Papke R.T."/>
            <person name="Sanchez Perez G."/>
            <person name="Sharma A.K."/>
            <person name="Nesbo C.L."/>
            <person name="MacLeod D."/>
            <person name="Bapteste E."/>
            <person name="Doolittle W.F."/>
            <person name="Charlebois R.L."/>
            <person name="Legault B."/>
            <person name="Rodriguez-Valera F."/>
        </authorList>
    </citation>
    <scope>NUCLEOTIDE SEQUENCE [LARGE SCALE GENOMIC DNA]</scope>
    <source>
        <strain>DSM 13855 / CECT 5946 / M31</strain>
    </source>
</reference>
<evidence type="ECO:0000255" key="1">
    <source>
        <dbReference type="HAMAP-Rule" id="MF_00446"/>
    </source>
</evidence>
<keyword id="KW-0068">Autocatalytic cleavage</keyword>
<keyword id="KW-0963">Cytoplasm</keyword>
<keyword id="KW-0210">Decarboxylase</keyword>
<keyword id="KW-0456">Lyase</keyword>
<keyword id="KW-0566">Pantothenate biosynthesis</keyword>
<keyword id="KW-0670">Pyruvate</keyword>
<keyword id="KW-1185">Reference proteome</keyword>
<keyword id="KW-0704">Schiff base</keyword>
<keyword id="KW-0865">Zymogen</keyword>
<proteinExistence type="inferred from homology"/>
<feature type="chain" id="PRO_0000236885" description="Aspartate 1-decarboxylase beta chain" evidence="1">
    <location>
        <begin position="1"/>
        <end position="24"/>
    </location>
</feature>
<feature type="chain" id="PRO_0000236886" description="Aspartate 1-decarboxylase alpha chain" evidence="1">
    <location>
        <begin position="25"/>
        <end position="146"/>
    </location>
</feature>
<feature type="active site" description="Schiff-base intermediate with substrate; via pyruvic acid" evidence="1">
    <location>
        <position position="25"/>
    </location>
</feature>
<feature type="active site" description="Proton donor" evidence="1">
    <location>
        <position position="58"/>
    </location>
</feature>
<feature type="binding site" evidence="1">
    <location>
        <position position="57"/>
    </location>
    <ligand>
        <name>substrate</name>
    </ligand>
</feature>
<feature type="binding site" evidence="1">
    <location>
        <begin position="73"/>
        <end position="75"/>
    </location>
    <ligand>
        <name>substrate</name>
    </ligand>
</feature>
<feature type="modified residue" description="Pyruvic acid (Ser)" evidence="1">
    <location>
        <position position="25"/>
    </location>
</feature>
<organism>
    <name type="scientific">Salinibacter ruber (strain DSM 13855 / M31)</name>
    <dbReference type="NCBI Taxonomy" id="309807"/>
    <lineage>
        <taxon>Bacteria</taxon>
        <taxon>Pseudomonadati</taxon>
        <taxon>Rhodothermota</taxon>
        <taxon>Rhodothermia</taxon>
        <taxon>Rhodothermales</taxon>
        <taxon>Salinibacteraceae</taxon>
        <taxon>Salinibacter</taxon>
    </lineage>
</organism>
<gene>
    <name evidence="1" type="primary">panD</name>
    <name type="ordered locus">SRU_1412</name>
</gene>
<dbReference type="EC" id="4.1.1.11" evidence="1"/>
<dbReference type="EMBL" id="CP000159">
    <property type="protein sequence ID" value="ABC46034.1"/>
    <property type="molecule type" value="Genomic_DNA"/>
</dbReference>
<dbReference type="RefSeq" id="WP_011404162.1">
    <property type="nucleotide sequence ID" value="NC_007677.1"/>
</dbReference>
<dbReference type="RefSeq" id="YP_445536.1">
    <property type="nucleotide sequence ID" value="NC_007677.1"/>
</dbReference>
<dbReference type="SMR" id="Q2S2P5"/>
<dbReference type="STRING" id="309807.SRU_1412"/>
<dbReference type="EnsemblBacteria" id="ABC46034">
    <property type="protein sequence ID" value="ABC46034"/>
    <property type="gene ID" value="SRU_1412"/>
</dbReference>
<dbReference type="GeneID" id="83728322"/>
<dbReference type="KEGG" id="sru:SRU_1412"/>
<dbReference type="PATRIC" id="fig|309807.25.peg.1467"/>
<dbReference type="eggNOG" id="COG0853">
    <property type="taxonomic scope" value="Bacteria"/>
</dbReference>
<dbReference type="HOGENOM" id="CLU_115305_1_0_10"/>
<dbReference type="OrthoDB" id="9803983at2"/>
<dbReference type="UniPathway" id="UPA00028">
    <property type="reaction ID" value="UER00002"/>
</dbReference>
<dbReference type="Proteomes" id="UP000008674">
    <property type="component" value="Chromosome"/>
</dbReference>
<dbReference type="GO" id="GO:0005829">
    <property type="term" value="C:cytosol"/>
    <property type="evidence" value="ECO:0007669"/>
    <property type="project" value="TreeGrafter"/>
</dbReference>
<dbReference type="GO" id="GO:0004068">
    <property type="term" value="F:aspartate 1-decarboxylase activity"/>
    <property type="evidence" value="ECO:0007669"/>
    <property type="project" value="UniProtKB-UniRule"/>
</dbReference>
<dbReference type="GO" id="GO:0006523">
    <property type="term" value="P:alanine biosynthetic process"/>
    <property type="evidence" value="ECO:0007669"/>
    <property type="project" value="InterPro"/>
</dbReference>
<dbReference type="GO" id="GO:0015940">
    <property type="term" value="P:pantothenate biosynthetic process"/>
    <property type="evidence" value="ECO:0007669"/>
    <property type="project" value="UniProtKB-UniRule"/>
</dbReference>
<dbReference type="CDD" id="cd06919">
    <property type="entry name" value="Asp_decarbox"/>
    <property type="match status" value="1"/>
</dbReference>
<dbReference type="Gene3D" id="2.40.40.20">
    <property type="match status" value="1"/>
</dbReference>
<dbReference type="HAMAP" id="MF_00446">
    <property type="entry name" value="PanD"/>
    <property type="match status" value="1"/>
</dbReference>
<dbReference type="InterPro" id="IPR009010">
    <property type="entry name" value="Asp_de-COase-like_dom_sf"/>
</dbReference>
<dbReference type="InterPro" id="IPR003190">
    <property type="entry name" value="Asp_decarbox"/>
</dbReference>
<dbReference type="NCBIfam" id="TIGR00223">
    <property type="entry name" value="panD"/>
    <property type="match status" value="1"/>
</dbReference>
<dbReference type="PANTHER" id="PTHR21012">
    <property type="entry name" value="ASPARTATE 1-DECARBOXYLASE"/>
    <property type="match status" value="1"/>
</dbReference>
<dbReference type="PANTHER" id="PTHR21012:SF0">
    <property type="entry name" value="ASPARTATE 1-DECARBOXYLASE"/>
    <property type="match status" value="1"/>
</dbReference>
<dbReference type="Pfam" id="PF02261">
    <property type="entry name" value="Asp_decarbox"/>
    <property type="match status" value="1"/>
</dbReference>
<dbReference type="PIRSF" id="PIRSF006246">
    <property type="entry name" value="Asp_decarbox"/>
    <property type="match status" value="1"/>
</dbReference>
<dbReference type="SUPFAM" id="SSF50692">
    <property type="entry name" value="ADC-like"/>
    <property type="match status" value="1"/>
</dbReference>
<protein>
    <recommendedName>
        <fullName evidence="1">Aspartate 1-decarboxylase</fullName>
        <ecNumber evidence="1">4.1.1.11</ecNumber>
    </recommendedName>
    <alternativeName>
        <fullName evidence="1">Aspartate alpha-decarboxylase</fullName>
    </alternativeName>
    <component>
        <recommendedName>
            <fullName evidence="1">Aspartate 1-decarboxylase beta chain</fullName>
        </recommendedName>
    </component>
    <component>
        <recommendedName>
            <fullName evidence="1">Aspartate 1-decarboxylase alpha chain</fullName>
        </recommendedName>
    </component>
</protein>
<comment type="function">
    <text evidence="1">Catalyzes the pyruvoyl-dependent decarboxylation of aspartate to produce beta-alanine.</text>
</comment>
<comment type="catalytic activity">
    <reaction evidence="1">
        <text>L-aspartate + H(+) = beta-alanine + CO2</text>
        <dbReference type="Rhea" id="RHEA:19497"/>
        <dbReference type="ChEBI" id="CHEBI:15378"/>
        <dbReference type="ChEBI" id="CHEBI:16526"/>
        <dbReference type="ChEBI" id="CHEBI:29991"/>
        <dbReference type="ChEBI" id="CHEBI:57966"/>
        <dbReference type="EC" id="4.1.1.11"/>
    </reaction>
</comment>
<comment type="cofactor">
    <cofactor evidence="1">
        <name>pyruvate</name>
        <dbReference type="ChEBI" id="CHEBI:15361"/>
    </cofactor>
    <text evidence="1">Binds 1 pyruvoyl group covalently per subunit.</text>
</comment>
<comment type="pathway">
    <text evidence="1">Cofactor biosynthesis; (R)-pantothenate biosynthesis; beta-alanine from L-aspartate: step 1/1.</text>
</comment>
<comment type="subunit">
    <text evidence="1">Heterooctamer of four alpha and four beta subunits.</text>
</comment>
<comment type="subcellular location">
    <subcellularLocation>
        <location evidence="1">Cytoplasm</location>
    </subcellularLocation>
</comment>
<comment type="PTM">
    <text evidence="1">Is synthesized initially as an inactive proenzyme, which is activated by self-cleavage at a specific serine bond to produce a beta-subunit with a hydroxyl group at its C-terminus and an alpha-subunit with a pyruvoyl group at its N-terminus.</text>
</comment>
<comment type="similarity">
    <text evidence="1">Belongs to the PanD family.</text>
</comment>